<keyword id="KW-0143">Chaperone</keyword>
<keyword id="KW-0574">Periplasm</keyword>
<keyword id="KW-0653">Protein transport</keyword>
<keyword id="KW-1185">Reference proteome</keyword>
<keyword id="KW-0732">Signal</keyword>
<keyword id="KW-0813">Transport</keyword>
<organism>
    <name type="scientific">Xanthomonas campestris pv. campestris (strain ATCC 33913 / DSM 3586 / NCPPB 528 / LMG 568 / P 25)</name>
    <dbReference type="NCBI Taxonomy" id="190485"/>
    <lineage>
        <taxon>Bacteria</taxon>
        <taxon>Pseudomonadati</taxon>
        <taxon>Pseudomonadota</taxon>
        <taxon>Gammaproteobacteria</taxon>
        <taxon>Lysobacterales</taxon>
        <taxon>Lysobacteraceae</taxon>
        <taxon>Xanthomonas</taxon>
    </lineage>
</organism>
<name>LOLA_XANCP</name>
<feature type="signal peptide" evidence="1">
    <location>
        <begin position="1"/>
        <end position="21"/>
    </location>
</feature>
<feature type="chain" id="PRO_0000018286" description="Outer-membrane lipoprotein carrier protein">
    <location>
        <begin position="22"/>
        <end position="209"/>
    </location>
</feature>
<gene>
    <name evidence="1" type="primary">lolA</name>
    <name type="ordered locus">XCC1974</name>
</gene>
<dbReference type="EMBL" id="AE008922">
    <property type="protein sequence ID" value="AAM41263.1"/>
    <property type="molecule type" value="Genomic_DNA"/>
</dbReference>
<dbReference type="RefSeq" id="NP_637339.1">
    <property type="nucleotide sequence ID" value="NC_003902.1"/>
</dbReference>
<dbReference type="SMR" id="Q8P991"/>
<dbReference type="STRING" id="190485.XCC1974"/>
<dbReference type="EnsemblBacteria" id="AAM41263">
    <property type="protein sequence ID" value="AAM41263"/>
    <property type="gene ID" value="XCC1974"/>
</dbReference>
<dbReference type="KEGG" id="xcc:XCC1974"/>
<dbReference type="PATRIC" id="fig|190485.4.peg.2109"/>
<dbReference type="eggNOG" id="COG2834">
    <property type="taxonomic scope" value="Bacteria"/>
</dbReference>
<dbReference type="HOGENOM" id="CLU_087560_0_0_6"/>
<dbReference type="OrthoDB" id="9787361at2"/>
<dbReference type="Proteomes" id="UP000001010">
    <property type="component" value="Chromosome"/>
</dbReference>
<dbReference type="GO" id="GO:0030288">
    <property type="term" value="C:outer membrane-bounded periplasmic space"/>
    <property type="evidence" value="ECO:0000318"/>
    <property type="project" value="GO_Central"/>
</dbReference>
<dbReference type="GO" id="GO:0044874">
    <property type="term" value="P:lipoprotein localization to outer membrane"/>
    <property type="evidence" value="ECO:0000318"/>
    <property type="project" value="GO_Central"/>
</dbReference>
<dbReference type="GO" id="GO:0042953">
    <property type="term" value="P:lipoprotein transport"/>
    <property type="evidence" value="ECO:0000318"/>
    <property type="project" value="GO_Central"/>
</dbReference>
<dbReference type="CDD" id="cd16325">
    <property type="entry name" value="LolA"/>
    <property type="match status" value="1"/>
</dbReference>
<dbReference type="FunFam" id="2.50.20.10:FF:000006">
    <property type="entry name" value="Outer-membrane lipoprotein carrier protein"/>
    <property type="match status" value="1"/>
</dbReference>
<dbReference type="Gene3D" id="2.50.20.10">
    <property type="entry name" value="Lipoprotein localisation LolA/LolB/LppX"/>
    <property type="match status" value="1"/>
</dbReference>
<dbReference type="HAMAP" id="MF_00240">
    <property type="entry name" value="LolA"/>
    <property type="match status" value="1"/>
</dbReference>
<dbReference type="InterPro" id="IPR029046">
    <property type="entry name" value="LolA/LolB/LppX"/>
</dbReference>
<dbReference type="InterPro" id="IPR004564">
    <property type="entry name" value="OM_lipoprot_carrier_LolA-like"/>
</dbReference>
<dbReference type="InterPro" id="IPR018323">
    <property type="entry name" value="OM_lipoprot_carrier_LolA_Pbac"/>
</dbReference>
<dbReference type="NCBIfam" id="TIGR00547">
    <property type="entry name" value="lolA"/>
    <property type="match status" value="1"/>
</dbReference>
<dbReference type="PANTHER" id="PTHR35869">
    <property type="entry name" value="OUTER-MEMBRANE LIPOPROTEIN CARRIER PROTEIN"/>
    <property type="match status" value="1"/>
</dbReference>
<dbReference type="PANTHER" id="PTHR35869:SF1">
    <property type="entry name" value="OUTER-MEMBRANE LIPOPROTEIN CARRIER PROTEIN"/>
    <property type="match status" value="1"/>
</dbReference>
<dbReference type="Pfam" id="PF03548">
    <property type="entry name" value="LolA"/>
    <property type="match status" value="1"/>
</dbReference>
<dbReference type="SUPFAM" id="SSF89392">
    <property type="entry name" value="Prokaryotic lipoproteins and lipoprotein localization factors"/>
    <property type="match status" value="1"/>
</dbReference>
<comment type="function">
    <text evidence="1">Participates in the translocation of lipoproteins from the inner membrane to the outer membrane. Only forms a complex with a lipoprotein if the residue after the N-terminal Cys is not an aspartate (The Asp acts as a targeting signal to indicate that the lipoprotein should stay in the inner membrane).</text>
</comment>
<comment type="subunit">
    <text evidence="1">Monomer.</text>
</comment>
<comment type="subcellular location">
    <subcellularLocation>
        <location evidence="1">Periplasm</location>
    </subcellularLocation>
</comment>
<comment type="similarity">
    <text evidence="1">Belongs to the LolA family.</text>
</comment>
<proteinExistence type="inferred from homology"/>
<reference key="1">
    <citation type="journal article" date="2002" name="Nature">
        <title>Comparison of the genomes of two Xanthomonas pathogens with differing host specificities.</title>
        <authorList>
            <person name="da Silva A.C.R."/>
            <person name="Ferro J.A."/>
            <person name="Reinach F.C."/>
            <person name="Farah C.S."/>
            <person name="Furlan L.R."/>
            <person name="Quaggio R.B."/>
            <person name="Monteiro-Vitorello C.B."/>
            <person name="Van Sluys M.A."/>
            <person name="Almeida N.F. Jr."/>
            <person name="Alves L.M.C."/>
            <person name="do Amaral A.M."/>
            <person name="Bertolini M.C."/>
            <person name="Camargo L.E.A."/>
            <person name="Camarotte G."/>
            <person name="Cannavan F."/>
            <person name="Cardozo J."/>
            <person name="Chambergo F."/>
            <person name="Ciapina L.P."/>
            <person name="Cicarelli R.M.B."/>
            <person name="Coutinho L.L."/>
            <person name="Cursino-Santos J.R."/>
            <person name="El-Dorry H."/>
            <person name="Faria J.B."/>
            <person name="Ferreira A.J.S."/>
            <person name="Ferreira R.C.C."/>
            <person name="Ferro M.I.T."/>
            <person name="Formighieri E.F."/>
            <person name="Franco M.C."/>
            <person name="Greggio C.C."/>
            <person name="Gruber A."/>
            <person name="Katsuyama A.M."/>
            <person name="Kishi L.T."/>
            <person name="Leite R.P."/>
            <person name="Lemos E.G.M."/>
            <person name="Lemos M.V.F."/>
            <person name="Locali E.C."/>
            <person name="Machado M.A."/>
            <person name="Madeira A.M.B.N."/>
            <person name="Martinez-Rossi N.M."/>
            <person name="Martins E.C."/>
            <person name="Meidanis J."/>
            <person name="Menck C.F.M."/>
            <person name="Miyaki C.Y."/>
            <person name="Moon D.H."/>
            <person name="Moreira L.M."/>
            <person name="Novo M.T.M."/>
            <person name="Okura V.K."/>
            <person name="Oliveira M.C."/>
            <person name="Oliveira V.R."/>
            <person name="Pereira H.A."/>
            <person name="Rossi A."/>
            <person name="Sena J.A.D."/>
            <person name="Silva C."/>
            <person name="de Souza R.F."/>
            <person name="Spinola L.A.F."/>
            <person name="Takita M.A."/>
            <person name="Tamura R.E."/>
            <person name="Teixeira E.C."/>
            <person name="Tezza R.I.D."/>
            <person name="Trindade dos Santos M."/>
            <person name="Truffi D."/>
            <person name="Tsai S.M."/>
            <person name="White F.F."/>
            <person name="Setubal J.C."/>
            <person name="Kitajima J.P."/>
        </authorList>
    </citation>
    <scope>NUCLEOTIDE SEQUENCE [LARGE SCALE GENOMIC DNA]</scope>
    <source>
        <strain>ATCC 33913 / DSM 3586 / NCPPB 528 / LMG 568 / P 25</strain>
    </source>
</reference>
<protein>
    <recommendedName>
        <fullName evidence="1">Outer-membrane lipoprotein carrier protein</fullName>
    </recommendedName>
</protein>
<evidence type="ECO:0000255" key="1">
    <source>
        <dbReference type="HAMAP-Rule" id="MF_00240"/>
    </source>
</evidence>
<sequence>MHRQLRYAVLATALFASTAFAGARQELDTFTRGLKGLDGQFSQRVTDANGRVKENSSGRVALATPRQFRWEYAKPYKQLIVADGKKVWVFDPDLEQVTVRAQGSEEQNSPLVALIDPTRLDKQYDVSEEAAPRDGLQWLSLTPKVDTDASFQMASLGFGKDGLAKMEVVDAVGQRTAISFSGWKRNPAFAADTFRYTPGKGVDVVGDAQ</sequence>
<accession>Q8P991</accession>